<comment type="function">
    <text evidence="1">An essential GTPase that binds both GDP and GTP, with rapid nucleotide exchange. Plays a role in 16S rRNA processing and 30S ribosomal subunit biogenesis and possibly also in cell cycle regulation and energy metabolism.</text>
</comment>
<comment type="subunit">
    <text evidence="1">Monomer.</text>
</comment>
<comment type="subcellular location">
    <subcellularLocation>
        <location>Cytoplasm</location>
    </subcellularLocation>
    <subcellularLocation>
        <location evidence="1">Cell membrane</location>
        <topology evidence="1">Peripheral membrane protein</topology>
    </subcellularLocation>
</comment>
<comment type="similarity">
    <text evidence="1 2">Belongs to the TRAFAC class TrmE-Era-EngA-EngB-Septin-like GTPase superfamily. Era GTPase family.</text>
</comment>
<keyword id="KW-1003">Cell membrane</keyword>
<keyword id="KW-0963">Cytoplasm</keyword>
<keyword id="KW-0342">GTP-binding</keyword>
<keyword id="KW-0472">Membrane</keyword>
<keyword id="KW-0547">Nucleotide-binding</keyword>
<keyword id="KW-1185">Reference proteome</keyword>
<keyword id="KW-0690">Ribosome biogenesis</keyword>
<keyword id="KW-0694">RNA-binding</keyword>
<keyword id="KW-0699">rRNA-binding</keyword>
<accession>P0A3C1</accession>
<accession>Q9KIH7</accession>
<sequence>MTNNKFKSGFVAILGRPNVGKSTFMNHVMGQKIAIMSDKPQTTRNKIQGIYTTENEQIVFIDTPGIHKPHNALGDFMVQSAYSTLRECDVVLFMVAADEPRSTGENMIIERLKKAEVPVILVVNKIDKIHPDRLFEIVADYTSQMEFSEVVPISAKQGNNTERLIDTLSEKLDEGPQYFPEDQITDHPERFLVSEMIREKILLLTREEVPHSIAVTTDQMTRDEETGKIHIMATIIVERKSQKGIILGKGGDMIRKIGKMARRDIEIMLGDKVYLETWVKIKNDWRDRKMDLADFGYNRDDYM</sequence>
<protein>
    <recommendedName>
        <fullName evidence="1">GTPase Era</fullName>
    </recommendedName>
</protein>
<feature type="chain" id="PRO_0000180020" description="GTPase Era">
    <location>
        <begin position="1"/>
        <end position="303"/>
    </location>
</feature>
<feature type="domain" description="Era-type G" evidence="2">
    <location>
        <begin position="7"/>
        <end position="174"/>
    </location>
</feature>
<feature type="domain" description="KH type-2" evidence="1">
    <location>
        <begin position="205"/>
        <end position="283"/>
    </location>
</feature>
<feature type="region of interest" description="G1" evidence="2">
    <location>
        <begin position="15"/>
        <end position="22"/>
    </location>
</feature>
<feature type="region of interest" description="G2" evidence="2">
    <location>
        <begin position="41"/>
        <end position="45"/>
    </location>
</feature>
<feature type="region of interest" description="G3" evidence="2">
    <location>
        <begin position="62"/>
        <end position="65"/>
    </location>
</feature>
<feature type="region of interest" description="G4" evidence="2">
    <location>
        <begin position="124"/>
        <end position="127"/>
    </location>
</feature>
<feature type="region of interest" description="G5" evidence="2">
    <location>
        <begin position="153"/>
        <end position="155"/>
    </location>
</feature>
<feature type="binding site" evidence="1">
    <location>
        <begin position="15"/>
        <end position="22"/>
    </location>
    <ligand>
        <name>GTP</name>
        <dbReference type="ChEBI" id="CHEBI:37565"/>
    </ligand>
</feature>
<feature type="binding site" evidence="1">
    <location>
        <begin position="62"/>
        <end position="66"/>
    </location>
    <ligand>
        <name>GTP</name>
        <dbReference type="ChEBI" id="CHEBI:37565"/>
    </ligand>
</feature>
<feature type="binding site" evidence="1">
    <location>
        <begin position="124"/>
        <end position="127"/>
    </location>
    <ligand>
        <name>GTP</name>
        <dbReference type="ChEBI" id="CHEBI:37565"/>
    </ligand>
</feature>
<dbReference type="EMBL" id="AE005176">
    <property type="protein sequence ID" value="AAK04449.1"/>
    <property type="molecule type" value="Genomic_DNA"/>
</dbReference>
<dbReference type="PIR" id="G86668">
    <property type="entry name" value="G86668"/>
</dbReference>
<dbReference type="RefSeq" id="NP_266507.1">
    <property type="nucleotide sequence ID" value="NC_002662.1"/>
</dbReference>
<dbReference type="RefSeq" id="WP_003131632.1">
    <property type="nucleotide sequence ID" value="NC_002662.1"/>
</dbReference>
<dbReference type="SMR" id="P0A3C1"/>
<dbReference type="PaxDb" id="272623-L0155"/>
<dbReference type="EnsemblBacteria" id="AAK04449">
    <property type="protein sequence ID" value="AAK04449"/>
    <property type="gene ID" value="L0155"/>
</dbReference>
<dbReference type="GeneID" id="89632529"/>
<dbReference type="KEGG" id="lla:L0155"/>
<dbReference type="PATRIC" id="fig|272623.7.peg.385"/>
<dbReference type="eggNOG" id="COG1159">
    <property type="taxonomic scope" value="Bacteria"/>
</dbReference>
<dbReference type="HOGENOM" id="CLU_038009_1_0_9"/>
<dbReference type="OrthoDB" id="9805918at2"/>
<dbReference type="Proteomes" id="UP000002196">
    <property type="component" value="Chromosome"/>
</dbReference>
<dbReference type="GO" id="GO:0005829">
    <property type="term" value="C:cytosol"/>
    <property type="evidence" value="ECO:0007669"/>
    <property type="project" value="TreeGrafter"/>
</dbReference>
<dbReference type="GO" id="GO:0005886">
    <property type="term" value="C:plasma membrane"/>
    <property type="evidence" value="ECO:0007669"/>
    <property type="project" value="UniProtKB-SubCell"/>
</dbReference>
<dbReference type="GO" id="GO:0005525">
    <property type="term" value="F:GTP binding"/>
    <property type="evidence" value="ECO:0007669"/>
    <property type="project" value="UniProtKB-UniRule"/>
</dbReference>
<dbReference type="GO" id="GO:0003924">
    <property type="term" value="F:GTPase activity"/>
    <property type="evidence" value="ECO:0007669"/>
    <property type="project" value="UniProtKB-UniRule"/>
</dbReference>
<dbReference type="GO" id="GO:0043024">
    <property type="term" value="F:ribosomal small subunit binding"/>
    <property type="evidence" value="ECO:0007669"/>
    <property type="project" value="TreeGrafter"/>
</dbReference>
<dbReference type="GO" id="GO:0070181">
    <property type="term" value="F:small ribosomal subunit rRNA binding"/>
    <property type="evidence" value="ECO:0007669"/>
    <property type="project" value="UniProtKB-UniRule"/>
</dbReference>
<dbReference type="GO" id="GO:0000028">
    <property type="term" value="P:ribosomal small subunit assembly"/>
    <property type="evidence" value="ECO:0007669"/>
    <property type="project" value="TreeGrafter"/>
</dbReference>
<dbReference type="CDD" id="cd04163">
    <property type="entry name" value="Era"/>
    <property type="match status" value="1"/>
</dbReference>
<dbReference type="CDD" id="cd22534">
    <property type="entry name" value="KH-II_Era"/>
    <property type="match status" value="1"/>
</dbReference>
<dbReference type="FunFam" id="3.30.300.20:FF:000003">
    <property type="entry name" value="GTPase Era"/>
    <property type="match status" value="1"/>
</dbReference>
<dbReference type="FunFam" id="3.40.50.300:FF:000094">
    <property type="entry name" value="GTPase Era"/>
    <property type="match status" value="1"/>
</dbReference>
<dbReference type="Gene3D" id="3.30.300.20">
    <property type="match status" value="1"/>
</dbReference>
<dbReference type="Gene3D" id="3.40.50.300">
    <property type="entry name" value="P-loop containing nucleotide triphosphate hydrolases"/>
    <property type="match status" value="1"/>
</dbReference>
<dbReference type="HAMAP" id="MF_00367">
    <property type="entry name" value="GTPase_Era"/>
    <property type="match status" value="1"/>
</dbReference>
<dbReference type="InterPro" id="IPR030388">
    <property type="entry name" value="G_ERA_dom"/>
</dbReference>
<dbReference type="InterPro" id="IPR006073">
    <property type="entry name" value="GTP-bd"/>
</dbReference>
<dbReference type="InterPro" id="IPR005662">
    <property type="entry name" value="GTPase_Era-like"/>
</dbReference>
<dbReference type="InterPro" id="IPR015946">
    <property type="entry name" value="KH_dom-like_a/b"/>
</dbReference>
<dbReference type="InterPro" id="IPR004044">
    <property type="entry name" value="KH_dom_type_2"/>
</dbReference>
<dbReference type="InterPro" id="IPR009019">
    <property type="entry name" value="KH_sf_prok-type"/>
</dbReference>
<dbReference type="InterPro" id="IPR027417">
    <property type="entry name" value="P-loop_NTPase"/>
</dbReference>
<dbReference type="InterPro" id="IPR005225">
    <property type="entry name" value="Small_GTP-bd"/>
</dbReference>
<dbReference type="NCBIfam" id="TIGR00436">
    <property type="entry name" value="era"/>
    <property type="match status" value="1"/>
</dbReference>
<dbReference type="NCBIfam" id="NF000908">
    <property type="entry name" value="PRK00089.1"/>
    <property type="match status" value="1"/>
</dbReference>
<dbReference type="NCBIfam" id="TIGR00231">
    <property type="entry name" value="small_GTP"/>
    <property type="match status" value="1"/>
</dbReference>
<dbReference type="PANTHER" id="PTHR42698">
    <property type="entry name" value="GTPASE ERA"/>
    <property type="match status" value="1"/>
</dbReference>
<dbReference type="PANTHER" id="PTHR42698:SF1">
    <property type="entry name" value="GTPASE ERA, MITOCHONDRIAL"/>
    <property type="match status" value="1"/>
</dbReference>
<dbReference type="Pfam" id="PF07650">
    <property type="entry name" value="KH_2"/>
    <property type="match status" value="1"/>
</dbReference>
<dbReference type="Pfam" id="PF01926">
    <property type="entry name" value="MMR_HSR1"/>
    <property type="match status" value="1"/>
</dbReference>
<dbReference type="SUPFAM" id="SSF52540">
    <property type="entry name" value="P-loop containing nucleoside triphosphate hydrolases"/>
    <property type="match status" value="1"/>
</dbReference>
<dbReference type="SUPFAM" id="SSF54814">
    <property type="entry name" value="Prokaryotic type KH domain (KH-domain type II)"/>
    <property type="match status" value="1"/>
</dbReference>
<dbReference type="PROSITE" id="PS51713">
    <property type="entry name" value="G_ERA"/>
    <property type="match status" value="1"/>
</dbReference>
<dbReference type="PROSITE" id="PS50823">
    <property type="entry name" value="KH_TYPE_2"/>
    <property type="match status" value="1"/>
</dbReference>
<evidence type="ECO:0000255" key="1">
    <source>
        <dbReference type="HAMAP-Rule" id="MF_00367"/>
    </source>
</evidence>
<evidence type="ECO:0000255" key="2">
    <source>
        <dbReference type="PROSITE-ProRule" id="PRU01050"/>
    </source>
</evidence>
<gene>
    <name evidence="1" type="primary">era</name>
    <name type="synonym">eraL</name>
    <name type="ordered locus">LL0351</name>
    <name type="ORF">L0155</name>
</gene>
<reference key="1">
    <citation type="journal article" date="2001" name="Genome Res.">
        <title>The complete genome sequence of the lactic acid bacterium Lactococcus lactis ssp. lactis IL1403.</title>
        <authorList>
            <person name="Bolotin A."/>
            <person name="Wincker P."/>
            <person name="Mauger S."/>
            <person name="Jaillon O."/>
            <person name="Malarme K."/>
            <person name="Weissenbach J."/>
            <person name="Ehrlich S.D."/>
            <person name="Sorokin A."/>
        </authorList>
    </citation>
    <scope>NUCLEOTIDE SEQUENCE [LARGE SCALE GENOMIC DNA]</scope>
    <source>
        <strain>IL1403</strain>
    </source>
</reference>
<proteinExistence type="inferred from homology"/>
<organism>
    <name type="scientific">Lactococcus lactis subsp. lactis (strain IL1403)</name>
    <name type="common">Streptococcus lactis</name>
    <dbReference type="NCBI Taxonomy" id="272623"/>
    <lineage>
        <taxon>Bacteria</taxon>
        <taxon>Bacillati</taxon>
        <taxon>Bacillota</taxon>
        <taxon>Bacilli</taxon>
        <taxon>Lactobacillales</taxon>
        <taxon>Streptococcaceae</taxon>
        <taxon>Lactococcus</taxon>
    </lineage>
</organism>
<name>ERA_LACLA</name>